<proteinExistence type="inferred from homology"/>
<dbReference type="EC" id="2.4.2.7" evidence="1"/>
<dbReference type="EMBL" id="CP000609">
    <property type="protein sequence ID" value="ABO35221.1"/>
    <property type="molecule type" value="Genomic_DNA"/>
</dbReference>
<dbReference type="RefSeq" id="WP_011868675.1">
    <property type="nucleotide sequence ID" value="NC_009135.1"/>
</dbReference>
<dbReference type="SMR" id="A4FYD7"/>
<dbReference type="STRING" id="402880.MmarC5_0915"/>
<dbReference type="GeneID" id="4927488"/>
<dbReference type="KEGG" id="mmq:MmarC5_0915"/>
<dbReference type="eggNOG" id="arCOG00030">
    <property type="taxonomic scope" value="Archaea"/>
</dbReference>
<dbReference type="HOGENOM" id="CLU_063339_3_0_2"/>
<dbReference type="OrthoDB" id="8323at2157"/>
<dbReference type="UniPathway" id="UPA00588">
    <property type="reaction ID" value="UER00646"/>
</dbReference>
<dbReference type="Proteomes" id="UP000000253">
    <property type="component" value="Chromosome"/>
</dbReference>
<dbReference type="GO" id="GO:0005737">
    <property type="term" value="C:cytoplasm"/>
    <property type="evidence" value="ECO:0007669"/>
    <property type="project" value="UniProtKB-SubCell"/>
</dbReference>
<dbReference type="GO" id="GO:0002055">
    <property type="term" value="F:adenine binding"/>
    <property type="evidence" value="ECO:0007669"/>
    <property type="project" value="TreeGrafter"/>
</dbReference>
<dbReference type="GO" id="GO:0003999">
    <property type="term" value="F:adenine phosphoribosyltransferase activity"/>
    <property type="evidence" value="ECO:0007669"/>
    <property type="project" value="UniProtKB-UniRule"/>
</dbReference>
<dbReference type="GO" id="GO:0016208">
    <property type="term" value="F:AMP binding"/>
    <property type="evidence" value="ECO:0007669"/>
    <property type="project" value="TreeGrafter"/>
</dbReference>
<dbReference type="GO" id="GO:0006168">
    <property type="term" value="P:adenine salvage"/>
    <property type="evidence" value="ECO:0007669"/>
    <property type="project" value="InterPro"/>
</dbReference>
<dbReference type="GO" id="GO:0044209">
    <property type="term" value="P:AMP salvage"/>
    <property type="evidence" value="ECO:0007669"/>
    <property type="project" value="UniProtKB-UniRule"/>
</dbReference>
<dbReference type="GO" id="GO:0006166">
    <property type="term" value="P:purine ribonucleoside salvage"/>
    <property type="evidence" value="ECO:0007669"/>
    <property type="project" value="UniProtKB-KW"/>
</dbReference>
<dbReference type="CDD" id="cd06223">
    <property type="entry name" value="PRTases_typeI"/>
    <property type="match status" value="1"/>
</dbReference>
<dbReference type="FunFam" id="3.40.50.2020:FF:000004">
    <property type="entry name" value="Adenine phosphoribosyltransferase"/>
    <property type="match status" value="1"/>
</dbReference>
<dbReference type="Gene3D" id="3.40.50.2020">
    <property type="match status" value="1"/>
</dbReference>
<dbReference type="HAMAP" id="MF_00004">
    <property type="entry name" value="Aden_phosphoribosyltr"/>
    <property type="match status" value="1"/>
</dbReference>
<dbReference type="InterPro" id="IPR005764">
    <property type="entry name" value="Ade_phspho_trans"/>
</dbReference>
<dbReference type="InterPro" id="IPR000836">
    <property type="entry name" value="PRibTrfase_dom"/>
</dbReference>
<dbReference type="InterPro" id="IPR029057">
    <property type="entry name" value="PRTase-like"/>
</dbReference>
<dbReference type="InterPro" id="IPR050054">
    <property type="entry name" value="UPRTase/APRTase"/>
</dbReference>
<dbReference type="NCBIfam" id="TIGR01090">
    <property type="entry name" value="apt"/>
    <property type="match status" value="1"/>
</dbReference>
<dbReference type="NCBIfam" id="NF002633">
    <property type="entry name" value="PRK02304.1-2"/>
    <property type="match status" value="1"/>
</dbReference>
<dbReference type="NCBIfam" id="NF002634">
    <property type="entry name" value="PRK02304.1-3"/>
    <property type="match status" value="1"/>
</dbReference>
<dbReference type="NCBIfam" id="NF002636">
    <property type="entry name" value="PRK02304.1-5"/>
    <property type="match status" value="1"/>
</dbReference>
<dbReference type="NCBIfam" id="NF009211">
    <property type="entry name" value="PRK12560.1"/>
    <property type="match status" value="1"/>
</dbReference>
<dbReference type="PANTHER" id="PTHR32315">
    <property type="entry name" value="ADENINE PHOSPHORIBOSYLTRANSFERASE"/>
    <property type="match status" value="1"/>
</dbReference>
<dbReference type="PANTHER" id="PTHR32315:SF3">
    <property type="entry name" value="ADENINE PHOSPHORIBOSYLTRANSFERASE"/>
    <property type="match status" value="1"/>
</dbReference>
<dbReference type="Pfam" id="PF00156">
    <property type="entry name" value="Pribosyltran"/>
    <property type="match status" value="1"/>
</dbReference>
<dbReference type="SUPFAM" id="SSF53271">
    <property type="entry name" value="PRTase-like"/>
    <property type="match status" value="1"/>
</dbReference>
<name>APT_METM5</name>
<reference key="1">
    <citation type="submission" date="2007-03" db="EMBL/GenBank/DDBJ databases">
        <title>Complete sequence of chromosome of Methanococcus maripaludis C5.</title>
        <authorList>
            <consortium name="US DOE Joint Genome Institute"/>
            <person name="Copeland A."/>
            <person name="Lucas S."/>
            <person name="Lapidus A."/>
            <person name="Barry K."/>
            <person name="Glavina del Rio T."/>
            <person name="Dalin E."/>
            <person name="Tice H."/>
            <person name="Pitluck S."/>
            <person name="Chertkov O."/>
            <person name="Brettin T."/>
            <person name="Bruce D."/>
            <person name="Han C."/>
            <person name="Detter J.C."/>
            <person name="Schmutz J."/>
            <person name="Larimer F."/>
            <person name="Land M."/>
            <person name="Hauser L."/>
            <person name="Kyrpides N."/>
            <person name="Mikhailova N."/>
            <person name="Sieprawska-Lupa M."/>
            <person name="Whitman W.B."/>
            <person name="Richardson P."/>
        </authorList>
    </citation>
    <scope>NUCLEOTIDE SEQUENCE [LARGE SCALE GENOMIC DNA]</scope>
    <source>
        <strain>C5 / ATCC BAA-1333</strain>
    </source>
</reference>
<organism>
    <name type="scientific">Methanococcus maripaludis (strain C5 / ATCC BAA-1333)</name>
    <dbReference type="NCBI Taxonomy" id="402880"/>
    <lineage>
        <taxon>Archaea</taxon>
        <taxon>Methanobacteriati</taxon>
        <taxon>Methanobacteriota</taxon>
        <taxon>Methanomada group</taxon>
        <taxon>Methanococci</taxon>
        <taxon>Methanococcales</taxon>
        <taxon>Methanococcaceae</taxon>
        <taxon>Methanococcus</taxon>
    </lineage>
</organism>
<gene>
    <name evidence="1" type="primary">apt1</name>
    <name type="ordered locus">MmarC5_0915</name>
</gene>
<evidence type="ECO:0000255" key="1">
    <source>
        <dbReference type="HAMAP-Rule" id="MF_00004"/>
    </source>
</evidence>
<comment type="function">
    <text evidence="1">Catalyzes a salvage reaction resulting in the formation of AMP, that is energically less costly than de novo synthesis.</text>
</comment>
<comment type="catalytic activity">
    <reaction evidence="1">
        <text>AMP + diphosphate = 5-phospho-alpha-D-ribose 1-diphosphate + adenine</text>
        <dbReference type="Rhea" id="RHEA:16609"/>
        <dbReference type="ChEBI" id="CHEBI:16708"/>
        <dbReference type="ChEBI" id="CHEBI:33019"/>
        <dbReference type="ChEBI" id="CHEBI:58017"/>
        <dbReference type="ChEBI" id="CHEBI:456215"/>
        <dbReference type="EC" id="2.4.2.7"/>
    </reaction>
</comment>
<comment type="pathway">
    <text evidence="1">Purine metabolism; AMP biosynthesis via salvage pathway; AMP from adenine: step 1/1.</text>
</comment>
<comment type="subunit">
    <text evidence="1">Homodimer.</text>
</comment>
<comment type="subcellular location">
    <subcellularLocation>
        <location evidence="1">Cytoplasm</location>
    </subcellularLocation>
</comment>
<comment type="similarity">
    <text evidence="1">Belongs to the purine/pyrimidine phosphoribosyltransferase family.</text>
</comment>
<keyword id="KW-0963">Cytoplasm</keyword>
<keyword id="KW-0328">Glycosyltransferase</keyword>
<keyword id="KW-0660">Purine salvage</keyword>
<keyword id="KW-0808">Transferase</keyword>
<protein>
    <recommendedName>
        <fullName evidence="1">Adenine phosphoribosyltransferase</fullName>
        <shortName evidence="1">APRT</shortName>
        <ecNumber evidence="1">2.4.2.7</ecNumber>
    </recommendedName>
</protein>
<accession>A4FYD7</accession>
<sequence>MDLRKKIRIVEDFPIEGISFKDVTPILKDPKAMKHTTKEITKYLEDKNVDVIVGPEARGFLFGIPVAHELDIGFVPVRKPGKLPYKTFSVDYALEYGADSLEIHSDGIEKGQNVAIVDDLLATGGTVLGVSKLVEKLGGHVSALNFVIELTELKGRDKLKGYGIQSLVKYDL</sequence>
<feature type="chain" id="PRO_0000329373" description="Adenine phosphoribosyltransferase">
    <location>
        <begin position="1"/>
        <end position="172"/>
    </location>
</feature>